<organism>
    <name type="scientific">Homo sapiens</name>
    <name type="common">Human</name>
    <dbReference type="NCBI Taxonomy" id="9606"/>
    <lineage>
        <taxon>Eukaryota</taxon>
        <taxon>Metazoa</taxon>
        <taxon>Chordata</taxon>
        <taxon>Craniata</taxon>
        <taxon>Vertebrata</taxon>
        <taxon>Euteleostomi</taxon>
        <taxon>Mammalia</taxon>
        <taxon>Eutheria</taxon>
        <taxon>Euarchontoglires</taxon>
        <taxon>Primates</taxon>
        <taxon>Haplorrhini</taxon>
        <taxon>Catarrhini</taxon>
        <taxon>Hominidae</taxon>
        <taxon>Homo</taxon>
    </lineage>
</organism>
<protein>
    <recommendedName>
        <fullName>E3 ubiquitin-protein ligase DZIP3</fullName>
        <ecNumber evidence="5">2.3.2.27</ecNumber>
    </recommendedName>
    <alternativeName>
        <fullName>DAZ-interacting protein 3</fullName>
    </alternativeName>
    <alternativeName>
        <fullName evidence="6">RING-type E3 ubiquitin transferase DZIP3</fullName>
    </alternativeName>
    <alternativeName>
        <fullName>RNA-binding ubiquitin ligase of 138 kDa</fullName>
        <shortName>hRUL138</shortName>
    </alternativeName>
</protein>
<name>DZIP3_HUMAN</name>
<accession>Q86Y13</accession>
<accession>B3KN01</accession>
<accession>O75162</accession>
<accession>Q6P3R9</accession>
<accession>Q6PH82</accession>
<accession>Q86Y14</accession>
<accession>Q86Y15</accession>
<accession>Q86Y16</accession>
<accession>Q8IWI0</accession>
<accession>Q96RS9</accession>
<keyword id="KW-0025">Alternative splicing</keyword>
<keyword id="KW-0175">Coiled coil</keyword>
<keyword id="KW-0963">Cytoplasm</keyword>
<keyword id="KW-0479">Metal-binding</keyword>
<keyword id="KW-1267">Proteomics identification</keyword>
<keyword id="KW-1185">Reference proteome</keyword>
<keyword id="KW-0694">RNA-binding</keyword>
<keyword id="KW-0808">Transferase</keyword>
<keyword id="KW-0833">Ubl conjugation pathway</keyword>
<keyword id="KW-0862">Zinc</keyword>
<keyword id="KW-0863">Zinc-finger</keyword>
<comment type="function">
    <text evidence="5">E3 Ubiquitin ligase proteins mediate ubiquitination and subsequent proteasomal degradation of target proteins. E3 ubiquitin ligases accept ubiquitin from an E2 ubiquitin-conjugating enzyme in the form of a thioester and then directly transfers the ubiquitin to targeted substrates. Able to specifically bind RNA.</text>
</comment>
<comment type="catalytic activity">
    <reaction evidence="5">
        <text>S-ubiquitinyl-[E2 ubiquitin-conjugating enzyme]-L-cysteine + [acceptor protein]-L-lysine = [E2 ubiquitin-conjugating enzyme]-L-cysteine + N(6)-ubiquitinyl-[acceptor protein]-L-lysine.</text>
        <dbReference type="EC" id="2.3.2.27"/>
    </reaction>
</comment>
<comment type="pathway">
    <text>Protein modification; protein ubiquitination.</text>
</comment>
<comment type="subunit">
    <text evidence="4">Interacts with DAZ proteins.</text>
</comment>
<comment type="interaction">
    <interactant intactId="EBI-948630">
        <id>Q86Y13</id>
    </interactant>
    <interactant intactId="EBI-541426">
        <id>Q9BXS5</id>
        <label>AP1M1</label>
    </interactant>
    <organismsDiffer>false</organismsDiffer>
    <experiments>3</experiments>
</comment>
<comment type="interaction">
    <interactant intactId="EBI-948630">
        <id>Q86Y13</id>
    </interactant>
    <interactant intactId="EBI-308663">
        <id>A7KAX9</id>
        <label>ARHGAP32</label>
    </interactant>
    <organismsDiffer>false</organismsDiffer>
    <experiments>3</experiments>
</comment>
<comment type="interaction">
    <interactant intactId="EBI-948630">
        <id>Q86Y13</id>
    </interactant>
    <interactant intactId="EBI-930964">
        <id>P54253</id>
        <label>ATXN1</label>
    </interactant>
    <organismsDiffer>false</organismsDiffer>
    <experiments>7</experiments>
</comment>
<comment type="interaction">
    <interactant intactId="EBI-948630">
        <id>Q86Y13</id>
    </interactant>
    <interactant intactId="EBI-2949658">
        <id>O95429</id>
        <label>BAG4</label>
    </interactant>
    <organismsDiffer>false</organismsDiffer>
    <experiments>3</experiments>
</comment>
<comment type="interaction">
    <interactant intactId="EBI-948630">
        <id>Q86Y13</id>
    </interactant>
    <interactant intactId="EBI-741977">
        <id>Q96MT8</id>
        <label>CEP63</label>
    </interactant>
    <organismsDiffer>false</organismsDiffer>
    <experiments>3</experiments>
</comment>
<comment type="interaction">
    <interactant intactId="EBI-948630">
        <id>Q86Y13</id>
    </interactant>
    <interactant intactId="EBI-2510157">
        <id>Q96EF6</id>
        <label>FBXO17</label>
    </interactant>
    <organismsDiffer>false</organismsDiffer>
    <experiments>3</experiments>
</comment>
<comment type="interaction">
    <interactant intactId="EBI-948630">
        <id>Q86Y13</id>
    </interactant>
    <interactant intactId="EBI-8469755">
        <id>Q6P1K8</id>
        <label>GTF2H2C_2</label>
    </interactant>
    <organismsDiffer>false</organismsDiffer>
    <experiments>3</experiments>
</comment>
<comment type="interaction">
    <interactant intactId="EBI-948630">
        <id>Q86Y13</id>
    </interactant>
    <interactant intactId="EBI-352986">
        <id>P52597</id>
        <label>HNRNPF</label>
    </interactant>
    <organismsDiffer>false</organismsDiffer>
    <experiments>6</experiments>
</comment>
<comment type="interaction">
    <interactant intactId="EBI-948630">
        <id>Q86Y13</id>
    </interactant>
    <interactant intactId="EBI-351590">
        <id>P31943</id>
        <label>HNRNPH1</label>
    </interactant>
    <organismsDiffer>false</organismsDiffer>
    <experiments>3</experiments>
</comment>
<comment type="interaction">
    <interactant intactId="EBI-948630">
        <id>Q86Y13</id>
    </interactant>
    <interactant intactId="EBI-1018153">
        <id>Q9BUJ2</id>
        <label>HNRNPUL1</label>
    </interactant>
    <organismsDiffer>false</organismsDiffer>
    <experiments>7</experiments>
</comment>
<comment type="interaction">
    <interactant intactId="EBI-948630">
        <id>Q86Y13</id>
    </interactant>
    <interactant intactId="EBI-1752118">
        <id>P31273</id>
        <label>HOXC8</label>
    </interactant>
    <organismsDiffer>false</organismsDiffer>
    <experiments>3</experiments>
</comment>
<comment type="interaction">
    <interactant intactId="EBI-948630">
        <id>Q86Y13</id>
    </interactant>
    <interactant intactId="EBI-748265">
        <id>P78337</id>
        <label>PITX1</label>
    </interactant>
    <organismsDiffer>false</organismsDiffer>
    <experiments>3</experiments>
</comment>
<comment type="interaction">
    <interactant intactId="EBI-948630">
        <id>Q86Y13</id>
    </interactant>
    <interactant intactId="EBI-715531">
        <id>Q9BQ04</id>
        <label>RBM4B</label>
    </interactant>
    <organismsDiffer>false</organismsDiffer>
    <experiments>4</experiments>
</comment>
<comment type="interaction">
    <interactant intactId="EBI-948630">
        <id>Q86Y13</id>
    </interactant>
    <interactant intactId="EBI-2820828">
        <id>Q01085</id>
        <label>TIAL1</label>
    </interactant>
    <organismsDiffer>false</organismsDiffer>
    <experiments>2</experiments>
</comment>
<comment type="interaction">
    <interactant intactId="EBI-948630">
        <id>Q86Y13</id>
    </interactant>
    <interactant intactId="EBI-949753">
        <id>Q63HR2</id>
        <label>TNS2</label>
    </interactant>
    <organismsDiffer>false</organismsDiffer>
    <experiments>3</experiments>
</comment>
<comment type="interaction">
    <interactant intactId="EBI-948630">
        <id>Q86Y13</id>
    </interactant>
    <interactant intactId="EBI-74615">
        <id>Q9H0E2</id>
        <label>TOLLIP</label>
    </interactant>
    <organismsDiffer>false</organismsDiffer>
    <experiments>2</experiments>
</comment>
<comment type="interaction">
    <interactant intactId="EBI-948630">
        <id>Q86Y13</id>
    </interactant>
    <interactant intactId="EBI-2129763">
        <id>Q96LR5</id>
        <label>UBE2E2</label>
    </interactant>
    <organismsDiffer>false</organismsDiffer>
    <experiments>4</experiments>
</comment>
<comment type="interaction">
    <interactant intactId="EBI-948630">
        <id>Q86Y13</id>
    </interactant>
    <interactant intactId="EBI-597063">
        <id>Q8TBK6</id>
        <label>ZCCHC10</label>
    </interactant>
    <organismsDiffer>false</organismsDiffer>
    <experiments>6</experiments>
</comment>
<comment type="interaction">
    <interactant intactId="EBI-948630">
        <id>Q86Y13</id>
    </interactant>
    <interactant intactId="EBI-707773">
        <id>P17028</id>
        <label>ZNF24</label>
    </interactant>
    <organismsDiffer>false</organismsDiffer>
    <experiments>5</experiments>
</comment>
<comment type="interaction">
    <interactant intactId="EBI-948630">
        <id>Q86Y13</id>
    </interactant>
    <interactant intactId="EBI-9676069">
        <id>Q7L2R6</id>
        <label>ZNF765</label>
    </interactant>
    <organismsDiffer>false</organismsDiffer>
    <experiments>3</experiments>
</comment>
<comment type="subcellular location">
    <subcellularLocation>
        <location evidence="5">Cytoplasm</location>
    </subcellularLocation>
</comment>
<comment type="alternative products">
    <event type="alternative splicing"/>
    <isoform>
        <id>Q86Y13-1</id>
        <name>1</name>
        <sequence type="displayed"/>
    </isoform>
    <isoform>
        <id>Q86Y13-2</id>
        <name>2</name>
        <name>Short</name>
        <sequence type="described" ref="VSP_010971 VSP_010972"/>
    </isoform>
</comment>
<comment type="tissue specificity">
    <text evidence="5">Widely expressed at low level. Highly expressed in skeletal muscle, kidney and heart. Expressed at low level in placenta, lung, brain, liver and pancreas.</text>
</comment>
<comment type="sequence caution" evidence="6">
    <conflict type="miscellaneous discrepancy">
        <sequence resource="EMBL-CDS" id="AAH39018"/>
    </conflict>
    <text>Contaminating sequence. Potential poly-A sequence.</text>
</comment>
<comment type="sequence caution" evidence="6">
    <conflict type="miscellaneous discrepancy">
        <sequence resource="EMBL-CDS" id="AAH56674"/>
    </conflict>
    <text>Contaminating sequence. Potential poly-A sequence.</text>
</comment>
<comment type="sequence caution" evidence="6">
    <conflict type="frameshift">
        <sequence resource="EMBL-CDS" id="AAK69484"/>
    </conflict>
</comment>
<comment type="sequence caution" evidence="6">
    <conflict type="erroneous initiation">
        <sequence resource="EMBL-CDS" id="BAA31650"/>
    </conflict>
</comment>
<sequence length="1208" mass="138604">MDSLPDEFFVRHPAVEDQRKEETENKLEKSSGQLNKQENDIPTDLVPVNLLLEVKKLLNAINTLPKGVVPHIKKFLQEDFSFQTMQREVAANSQNGEEIVPALTLRFLITQLEAALRNIQAGNYTAHQINIGYYLTLLFLYGVALTERGKKEDYTEAENKFLVMKMMIQENEICENFMSLVYFGRGLLRCAQKRYNGGLLEFHKSLQEIGDKNDHWFDIDPTEDEDLPTTFKDLLNNFIKTTESNIMKQTICSYLDCERSCEADILKNTSYKGFFQLMCSKSCCVYFHKICWKKFKNLKYPGENDQSFSGKKCLKEGCTGDMVRMLQCDVPGIVKILFEVVRKDEYITIENLGASYRKLISLKITDTDIRPKISLKFNTKDEMPIFKLDYNYFYHLLHIIIISGTDIVRQIFDEAMPPPLLKKELLIHKNVLESYYNHLWTNHPLGGSWHLLYPPNKELPQSKQFDLCLLLALIKHLNVFPAPKKGWNMEPPSSDISKSADILRLCKYRDILLSEILMNGLTESQFNSIWKKVSDILLRLGMMQEDIDKVKENPIENISLDYHQLSVYLGIPVPEIIQRMLSCYQQGIALQSITGSQRIEIEELQNEEEELSPPLMEYNINVKSHPEIQFAEINKDGTSIPSESSTESLKDLQEVKSKQRKKKKTKNKKNKDSKEDQVPYVVEKEEQLRKEQANPHSVSRLIKDDASDVQEDSAMEDKFYSLDELHILDMIEQGSAGKVTTDYGETEKERLARQRQLYKLHYQCEDFKRQLRTVTFRWQENQMQIKKKDKIIASLNQQVAFGINKVSKLQRQIHAKDNEIKNLKEQLSMKRSQWEMEKHNLESTMKTYVSKLNAETSRALTAEVYFLQCRRDFGLLHLEQTEKECLNQLARVTHMAASNLESLQLKAAVDSWNAIVADVRNKIAFLRTQYNEQINKVKQGFALSTLPPVQLPPPPPSPEILMQQFLGRPLVKESFFRPILTVPQMPAVCPGVVSATGQPRAPLMTGIAWALPAPVGDAVPPSAGLRSDPSIMNWERITDRLKTAFPQQTRKELTDFLRKLKDAYGKSLSELTFDEIVCKISQFIDPKKSQSQGKSVSNVNCVSPSHSPSQPDAAQPPKPAWRPLTSQGPATWEGASNPDEEEEEEEPCVICHENLSPENLSVLPCAHKFHAQCIRPWLMQQGTCPTCRLHVLLPEEFPGHPSRQLPKI</sequence>
<evidence type="ECO:0000255" key="1"/>
<evidence type="ECO:0000255" key="2">
    <source>
        <dbReference type="PROSITE-ProRule" id="PRU00175"/>
    </source>
</evidence>
<evidence type="ECO:0000256" key="3">
    <source>
        <dbReference type="SAM" id="MobiDB-lite"/>
    </source>
</evidence>
<evidence type="ECO:0000269" key="4">
    <source>
    </source>
</evidence>
<evidence type="ECO:0000269" key="5">
    <source>
    </source>
</evidence>
<evidence type="ECO:0000305" key="6"/>
<feature type="chain" id="PRO_0000055898" description="E3 ubiquitin-protein ligase DZIP3">
    <location>
        <begin position="1"/>
        <end position="1208"/>
    </location>
</feature>
<feature type="zinc finger region" description="RING-type; atypical" evidence="2">
    <location>
        <begin position="1148"/>
        <end position="1188"/>
    </location>
</feature>
<feature type="region of interest" description="Disordered" evidence="3">
    <location>
        <begin position="10"/>
        <end position="38"/>
    </location>
</feature>
<feature type="region of interest" description="Disordered" evidence="3">
    <location>
        <begin position="637"/>
        <end position="698"/>
    </location>
</feature>
<feature type="region of interest" description="Disordered" evidence="3">
    <location>
        <begin position="1088"/>
        <end position="1145"/>
    </location>
</feature>
<feature type="coiled-coil region" evidence="1">
    <location>
        <begin position="14"/>
        <end position="43"/>
    </location>
</feature>
<feature type="coiled-coil region" evidence="1">
    <location>
        <begin position="647"/>
        <end position="676"/>
    </location>
</feature>
<feature type="coiled-coil region" evidence="1">
    <location>
        <begin position="792"/>
        <end position="853"/>
    </location>
</feature>
<feature type="coiled-coil region" evidence="1">
    <location>
        <begin position="904"/>
        <end position="939"/>
    </location>
</feature>
<feature type="compositionally biased region" description="Basic and acidic residues" evidence="3">
    <location>
        <begin position="10"/>
        <end position="29"/>
    </location>
</feature>
<feature type="compositionally biased region" description="Polar residues" evidence="3">
    <location>
        <begin position="637"/>
        <end position="647"/>
    </location>
</feature>
<feature type="compositionally biased region" description="Basic and acidic residues" evidence="3">
    <location>
        <begin position="648"/>
        <end position="657"/>
    </location>
</feature>
<feature type="compositionally biased region" description="Basic residues" evidence="3">
    <location>
        <begin position="658"/>
        <end position="669"/>
    </location>
</feature>
<feature type="compositionally biased region" description="Basic and acidic residues" evidence="3">
    <location>
        <begin position="670"/>
        <end position="693"/>
    </location>
</feature>
<feature type="compositionally biased region" description="Polar residues" evidence="3">
    <location>
        <begin position="1089"/>
        <end position="1112"/>
    </location>
</feature>
<feature type="splice variant" id="VSP_010971" description="In isoform 2." evidence="6">
    <original>GE</original>
    <variation>EF</variation>
    <location>
        <begin position="302"/>
        <end position="303"/>
    </location>
</feature>
<feature type="splice variant" id="VSP_010972" description="In isoform 2." evidence="6">
    <location>
        <begin position="304"/>
        <end position="1208"/>
    </location>
</feature>
<feature type="mutagenesis site" description="Strongly decreases RNA-binding activity." evidence="5">
    <original>KKKTK</original>
    <variation>SGSTA</variation>
    <location>
        <begin position="662"/>
        <end position="666"/>
    </location>
</feature>
<feature type="mutagenesis site" description="Abolishes ubiquitin ligase activity." evidence="5">
    <original>C</original>
    <variation>S</variation>
    <location>
        <position position="1187"/>
    </location>
</feature>
<feature type="sequence conflict" description="In Ref. 4; AAH56674." evidence="6" ref="4">
    <original>D</original>
    <variation>G</variation>
    <location>
        <position position="368"/>
    </location>
</feature>
<gene>
    <name type="primary">DZIP3</name>
    <name type="synonym">KIAA0675</name>
</gene>
<reference key="1">
    <citation type="journal article" date="2003" name="J. Cell Sci.">
        <title>hRUL138, a novel human RNA-binding RING-H2 ubiquitin-protein ligase.</title>
        <authorList>
            <person name="Kreft S.G."/>
            <person name="Nassal M."/>
        </authorList>
    </citation>
    <scope>NUCLEOTIDE SEQUENCE (ISOFORMS 1 AND 2)</scope>
    <scope>FUNCTION</scope>
    <scope>CATALYTIC ACTIVITY</scope>
    <scope>SUBCELLULAR LOCATION</scope>
    <scope>RNA-BINDING</scope>
    <scope>TISSUE SPECIFICITY</scope>
    <scope>MUTAGENESIS OF 662-LYS--LYS-666 AND CYS-1187</scope>
    <source>
        <tissue>Liver</tissue>
        <tissue>Uterus</tissue>
    </source>
</reference>
<reference key="2">
    <citation type="journal article" date="1998" name="DNA Res.">
        <title>Prediction of the coding sequences of unidentified human genes. X. The complete sequences of 100 new cDNA clones from brain which can code for large proteins in vitro.</title>
        <authorList>
            <person name="Ishikawa K."/>
            <person name="Nagase T."/>
            <person name="Suyama M."/>
            <person name="Miyajima N."/>
            <person name="Tanaka A."/>
            <person name="Kotani H."/>
            <person name="Nomura N."/>
            <person name="Ohara O."/>
        </authorList>
    </citation>
    <scope>NUCLEOTIDE SEQUENCE [LARGE SCALE MRNA]</scope>
    <source>
        <tissue>Brain</tissue>
    </source>
</reference>
<reference key="3">
    <citation type="journal article" date="2004" name="Nat. Genet.">
        <title>Complete sequencing and characterization of 21,243 full-length human cDNAs.</title>
        <authorList>
            <person name="Ota T."/>
            <person name="Suzuki Y."/>
            <person name="Nishikawa T."/>
            <person name="Otsuki T."/>
            <person name="Sugiyama T."/>
            <person name="Irie R."/>
            <person name="Wakamatsu A."/>
            <person name="Hayashi K."/>
            <person name="Sato H."/>
            <person name="Nagai K."/>
            <person name="Kimura K."/>
            <person name="Makita H."/>
            <person name="Sekine M."/>
            <person name="Obayashi M."/>
            <person name="Nishi T."/>
            <person name="Shibahara T."/>
            <person name="Tanaka T."/>
            <person name="Ishii S."/>
            <person name="Yamamoto J."/>
            <person name="Saito K."/>
            <person name="Kawai Y."/>
            <person name="Isono Y."/>
            <person name="Nakamura Y."/>
            <person name="Nagahari K."/>
            <person name="Murakami K."/>
            <person name="Yasuda T."/>
            <person name="Iwayanagi T."/>
            <person name="Wagatsuma M."/>
            <person name="Shiratori A."/>
            <person name="Sudo H."/>
            <person name="Hosoiri T."/>
            <person name="Kaku Y."/>
            <person name="Kodaira H."/>
            <person name="Kondo H."/>
            <person name="Sugawara M."/>
            <person name="Takahashi M."/>
            <person name="Kanda K."/>
            <person name="Yokoi T."/>
            <person name="Furuya T."/>
            <person name="Kikkawa E."/>
            <person name="Omura Y."/>
            <person name="Abe K."/>
            <person name="Kamihara K."/>
            <person name="Katsuta N."/>
            <person name="Sato K."/>
            <person name="Tanikawa M."/>
            <person name="Yamazaki M."/>
            <person name="Ninomiya K."/>
            <person name="Ishibashi T."/>
            <person name="Yamashita H."/>
            <person name="Murakawa K."/>
            <person name="Fujimori K."/>
            <person name="Tanai H."/>
            <person name="Kimata M."/>
            <person name="Watanabe M."/>
            <person name="Hiraoka S."/>
            <person name="Chiba Y."/>
            <person name="Ishida S."/>
            <person name="Ono Y."/>
            <person name="Takiguchi S."/>
            <person name="Watanabe S."/>
            <person name="Yosida M."/>
            <person name="Hotuta T."/>
            <person name="Kusano J."/>
            <person name="Kanehori K."/>
            <person name="Takahashi-Fujii A."/>
            <person name="Hara H."/>
            <person name="Tanase T.-O."/>
            <person name="Nomura Y."/>
            <person name="Togiya S."/>
            <person name="Komai F."/>
            <person name="Hara R."/>
            <person name="Takeuchi K."/>
            <person name="Arita M."/>
            <person name="Imose N."/>
            <person name="Musashino K."/>
            <person name="Yuuki H."/>
            <person name="Oshima A."/>
            <person name="Sasaki N."/>
            <person name="Aotsuka S."/>
            <person name="Yoshikawa Y."/>
            <person name="Matsunawa H."/>
            <person name="Ichihara T."/>
            <person name="Shiohata N."/>
            <person name="Sano S."/>
            <person name="Moriya S."/>
            <person name="Momiyama H."/>
            <person name="Satoh N."/>
            <person name="Takami S."/>
            <person name="Terashima Y."/>
            <person name="Suzuki O."/>
            <person name="Nakagawa S."/>
            <person name="Senoh A."/>
            <person name="Mizoguchi H."/>
            <person name="Goto Y."/>
            <person name="Shimizu F."/>
            <person name="Wakebe H."/>
            <person name="Hishigaki H."/>
            <person name="Watanabe T."/>
            <person name="Sugiyama A."/>
            <person name="Takemoto M."/>
            <person name="Kawakami B."/>
            <person name="Yamazaki M."/>
            <person name="Watanabe K."/>
            <person name="Kumagai A."/>
            <person name="Itakura S."/>
            <person name="Fukuzumi Y."/>
            <person name="Fujimori Y."/>
            <person name="Komiyama M."/>
            <person name="Tashiro H."/>
            <person name="Tanigami A."/>
            <person name="Fujiwara T."/>
            <person name="Ono T."/>
            <person name="Yamada K."/>
            <person name="Fujii Y."/>
            <person name="Ozaki K."/>
            <person name="Hirao M."/>
            <person name="Ohmori Y."/>
            <person name="Kawabata A."/>
            <person name="Hikiji T."/>
            <person name="Kobatake N."/>
            <person name="Inagaki H."/>
            <person name="Ikema Y."/>
            <person name="Okamoto S."/>
            <person name="Okitani R."/>
            <person name="Kawakami T."/>
            <person name="Noguchi S."/>
            <person name="Itoh T."/>
            <person name="Shigeta K."/>
            <person name="Senba T."/>
            <person name="Matsumura K."/>
            <person name="Nakajima Y."/>
            <person name="Mizuno T."/>
            <person name="Morinaga M."/>
            <person name="Sasaki M."/>
            <person name="Togashi T."/>
            <person name="Oyama M."/>
            <person name="Hata H."/>
            <person name="Watanabe M."/>
            <person name="Komatsu T."/>
            <person name="Mizushima-Sugano J."/>
            <person name="Satoh T."/>
            <person name="Shirai Y."/>
            <person name="Takahashi Y."/>
            <person name="Nakagawa K."/>
            <person name="Okumura K."/>
            <person name="Nagase T."/>
            <person name="Nomura N."/>
            <person name="Kikuchi H."/>
            <person name="Masuho Y."/>
            <person name="Yamashita R."/>
            <person name="Nakai K."/>
            <person name="Yada T."/>
            <person name="Nakamura Y."/>
            <person name="Ohara O."/>
            <person name="Isogai T."/>
            <person name="Sugano S."/>
        </authorList>
    </citation>
    <scope>NUCLEOTIDE SEQUENCE [LARGE SCALE MRNA] (ISOFORM 1)</scope>
</reference>
<reference key="4">
    <citation type="journal article" date="2004" name="Genome Res.">
        <title>The status, quality, and expansion of the NIH full-length cDNA project: the Mammalian Gene Collection (MGC).</title>
        <authorList>
            <consortium name="The MGC Project Team"/>
        </authorList>
    </citation>
    <scope>NUCLEOTIDE SEQUENCE [LARGE SCALE MRNA] (ISOFORM 1)</scope>
    <source>
        <tissue>Skin</tissue>
        <tissue>Testis</tissue>
    </source>
</reference>
<reference key="5">
    <citation type="journal article" date="2003" name="Proc. Natl. Acad. Sci. U.S.A.">
        <title>Human Pumilio-2 is expressed in embryonic stem cells and germ cells and interacts with DAZ (Deleted in AZoospermia) and DAZ-like proteins.</title>
        <authorList>
            <person name="Moore F.L."/>
            <person name="Jaruzelska J."/>
            <person name="Fox M.S."/>
            <person name="Urano J."/>
            <person name="Firpo M.T."/>
            <person name="Turek P.J."/>
            <person name="Dorfman D.M."/>
            <person name="Reijo Pera R.A."/>
        </authorList>
    </citation>
    <scope>NUCLEOTIDE SEQUENCE [MRNA] OF 641-1208</scope>
    <scope>INTERACTION WITH DAZ</scope>
</reference>
<dbReference type="EC" id="2.3.2.27" evidence="5"/>
<dbReference type="EMBL" id="AY227651">
    <property type="protein sequence ID" value="AAO72967.1"/>
    <property type="molecule type" value="mRNA"/>
</dbReference>
<dbReference type="EMBL" id="AY227652">
    <property type="protein sequence ID" value="AAO72968.1"/>
    <property type="molecule type" value="mRNA"/>
</dbReference>
<dbReference type="EMBL" id="AY227653">
    <property type="protein sequence ID" value="AAO72969.1"/>
    <property type="molecule type" value="Transcribed_RNA"/>
</dbReference>
<dbReference type="EMBL" id="AY227654">
    <property type="protein sequence ID" value="AAO72970.1"/>
    <property type="molecule type" value="mRNA"/>
</dbReference>
<dbReference type="EMBL" id="AB014575">
    <property type="protein sequence ID" value="BAA31650.2"/>
    <property type="status" value="ALT_INIT"/>
    <property type="molecule type" value="mRNA"/>
</dbReference>
<dbReference type="EMBL" id="AK023138">
    <property type="protein sequence ID" value="BAG51163.1"/>
    <property type="molecule type" value="mRNA"/>
</dbReference>
<dbReference type="EMBL" id="BC039018">
    <property type="protein sequence ID" value="AAH39018.1"/>
    <property type="status" value="ALT_SEQ"/>
    <property type="molecule type" value="mRNA"/>
</dbReference>
<dbReference type="EMBL" id="BC056674">
    <property type="protein sequence ID" value="AAH56674.1"/>
    <property type="status" value="ALT_SEQ"/>
    <property type="molecule type" value="mRNA"/>
</dbReference>
<dbReference type="EMBL" id="BC063882">
    <property type="protein sequence ID" value="AAH63882.1"/>
    <property type="molecule type" value="mRNA"/>
</dbReference>
<dbReference type="EMBL" id="AF279370">
    <property type="protein sequence ID" value="AAK69484.1"/>
    <property type="status" value="ALT_FRAME"/>
    <property type="molecule type" value="mRNA"/>
</dbReference>
<dbReference type="CCDS" id="CCDS2952.1">
    <molecule id="Q86Y13-1"/>
</dbReference>
<dbReference type="PIR" id="T00362">
    <property type="entry name" value="T00362"/>
</dbReference>
<dbReference type="RefSeq" id="NP_055463.1">
    <molecule id="Q86Y13-1"/>
    <property type="nucleotide sequence ID" value="NM_014648.4"/>
</dbReference>
<dbReference type="RefSeq" id="XP_005247971.1">
    <molecule id="Q86Y13-1"/>
    <property type="nucleotide sequence ID" value="XM_005247914.5"/>
</dbReference>
<dbReference type="RefSeq" id="XP_005247972.1">
    <molecule id="Q86Y13-1"/>
    <property type="nucleotide sequence ID" value="XM_005247915.4"/>
</dbReference>
<dbReference type="RefSeq" id="XP_005247973.1">
    <molecule id="Q86Y13-1"/>
    <property type="nucleotide sequence ID" value="XM_005247916.4"/>
</dbReference>
<dbReference type="RefSeq" id="XP_005247974.1">
    <molecule id="Q86Y13-1"/>
    <property type="nucleotide sequence ID" value="XM_005247917.4"/>
</dbReference>
<dbReference type="RefSeq" id="XP_005247975.1">
    <molecule id="Q86Y13-1"/>
    <property type="nucleotide sequence ID" value="XM_005247918.4"/>
</dbReference>
<dbReference type="RefSeq" id="XP_016863029.1">
    <molecule id="Q86Y13-1"/>
    <property type="nucleotide sequence ID" value="XM_017007540.2"/>
</dbReference>
<dbReference type="RefSeq" id="XP_054204461.1">
    <molecule id="Q86Y13-1"/>
    <property type="nucleotide sequence ID" value="XM_054348486.1"/>
</dbReference>
<dbReference type="RefSeq" id="XP_054204462.1">
    <molecule id="Q86Y13-1"/>
    <property type="nucleotide sequence ID" value="XM_054348487.1"/>
</dbReference>
<dbReference type="RefSeq" id="XP_054204463.1">
    <molecule id="Q86Y13-1"/>
    <property type="nucleotide sequence ID" value="XM_054348488.1"/>
</dbReference>
<dbReference type="RefSeq" id="XP_054204464.1">
    <molecule id="Q86Y13-1"/>
    <property type="nucleotide sequence ID" value="XM_054348489.1"/>
</dbReference>
<dbReference type="RefSeq" id="XP_054204465.1">
    <molecule id="Q86Y13-1"/>
    <property type="nucleotide sequence ID" value="XM_054348490.1"/>
</dbReference>
<dbReference type="RefSeq" id="XP_054204466.1">
    <molecule id="Q86Y13-1"/>
    <property type="nucleotide sequence ID" value="XM_054348491.1"/>
</dbReference>
<dbReference type="RefSeq" id="XP_054204467.1">
    <molecule id="Q86Y13-1"/>
    <property type="nucleotide sequence ID" value="XM_054348492.1"/>
</dbReference>
<dbReference type="SMR" id="Q86Y13"/>
<dbReference type="BioGRID" id="115021">
    <property type="interactions" value="178"/>
</dbReference>
<dbReference type="FunCoup" id="Q86Y13">
    <property type="interactions" value="723"/>
</dbReference>
<dbReference type="IntAct" id="Q86Y13">
    <property type="interactions" value="54"/>
</dbReference>
<dbReference type="MINT" id="Q86Y13"/>
<dbReference type="STRING" id="9606.ENSP00000355028"/>
<dbReference type="iPTMnet" id="Q86Y13"/>
<dbReference type="PhosphoSitePlus" id="Q86Y13"/>
<dbReference type="BioMuta" id="DZIP3"/>
<dbReference type="DMDM" id="50400482"/>
<dbReference type="jPOST" id="Q86Y13"/>
<dbReference type="MassIVE" id="Q86Y13"/>
<dbReference type="PaxDb" id="9606-ENSP00000355028"/>
<dbReference type="PeptideAtlas" id="Q86Y13"/>
<dbReference type="ProteomicsDB" id="70350">
    <molecule id="Q86Y13-1"/>
</dbReference>
<dbReference type="ProteomicsDB" id="70351">
    <molecule id="Q86Y13-2"/>
</dbReference>
<dbReference type="Pumba" id="Q86Y13"/>
<dbReference type="Antibodypedia" id="32388">
    <property type="antibodies" value="162 antibodies from 21 providers"/>
</dbReference>
<dbReference type="DNASU" id="9666"/>
<dbReference type="Ensembl" id="ENST00000361582.8">
    <molecule id="Q86Y13-1"/>
    <property type="protein sequence ID" value="ENSP00000355028.3"/>
    <property type="gene ID" value="ENSG00000198919.13"/>
</dbReference>
<dbReference type="Ensembl" id="ENST00000463306.1">
    <molecule id="Q86Y13-1"/>
    <property type="protein sequence ID" value="ENSP00000419981.1"/>
    <property type="gene ID" value="ENSG00000198919.13"/>
</dbReference>
<dbReference type="Ensembl" id="ENST00000495008.5">
    <molecule id="Q86Y13-2"/>
    <property type="protein sequence ID" value="ENSP00000418871.1"/>
    <property type="gene ID" value="ENSG00000198919.13"/>
</dbReference>
<dbReference type="GeneID" id="9666"/>
<dbReference type="KEGG" id="hsa:9666"/>
<dbReference type="MANE-Select" id="ENST00000361582.8">
    <property type="protein sequence ID" value="ENSP00000355028.3"/>
    <property type="RefSeq nucleotide sequence ID" value="NM_014648.4"/>
    <property type="RefSeq protein sequence ID" value="NP_055463.1"/>
</dbReference>
<dbReference type="UCSC" id="uc003dxd.4">
    <molecule id="Q86Y13-1"/>
    <property type="organism name" value="human"/>
</dbReference>
<dbReference type="AGR" id="HGNC:30938"/>
<dbReference type="CTD" id="9666"/>
<dbReference type="DisGeNET" id="9666"/>
<dbReference type="GeneCards" id="DZIP3"/>
<dbReference type="HGNC" id="HGNC:30938">
    <property type="gene designation" value="DZIP3"/>
</dbReference>
<dbReference type="HPA" id="ENSG00000198919">
    <property type="expression patterns" value="Low tissue specificity"/>
</dbReference>
<dbReference type="MIM" id="608672">
    <property type="type" value="gene"/>
</dbReference>
<dbReference type="neXtProt" id="NX_Q86Y13"/>
<dbReference type="OpenTargets" id="ENSG00000198919"/>
<dbReference type="PharmGKB" id="PA162384137"/>
<dbReference type="VEuPathDB" id="HostDB:ENSG00000198919"/>
<dbReference type="eggNOG" id="KOG0800">
    <property type="taxonomic scope" value="Eukaryota"/>
</dbReference>
<dbReference type="GeneTree" id="ENSGT00940000161692"/>
<dbReference type="HOGENOM" id="CLU_007762_0_0_1"/>
<dbReference type="InParanoid" id="Q86Y13"/>
<dbReference type="OMA" id="KETICSF"/>
<dbReference type="OrthoDB" id="8062037at2759"/>
<dbReference type="PAN-GO" id="Q86Y13">
    <property type="GO annotations" value="5 GO annotations based on evolutionary models"/>
</dbReference>
<dbReference type="PhylomeDB" id="Q86Y13"/>
<dbReference type="TreeFam" id="TF333981"/>
<dbReference type="PathwayCommons" id="Q86Y13"/>
<dbReference type="Reactome" id="R-HSA-983168">
    <property type="pathway name" value="Antigen processing: Ubiquitination &amp; Proteasome degradation"/>
</dbReference>
<dbReference type="SignaLink" id="Q86Y13"/>
<dbReference type="SIGNOR" id="Q86Y13"/>
<dbReference type="UniPathway" id="UPA00143"/>
<dbReference type="BioGRID-ORCS" id="9666">
    <property type="hits" value="13 hits in 1197 CRISPR screens"/>
</dbReference>
<dbReference type="CD-CODE" id="232F8A39">
    <property type="entry name" value="P-body"/>
</dbReference>
<dbReference type="CD-CODE" id="DEE660B4">
    <property type="entry name" value="Stress granule"/>
</dbReference>
<dbReference type="ChiTaRS" id="DZIP3">
    <property type="organism name" value="human"/>
</dbReference>
<dbReference type="GenomeRNAi" id="9666"/>
<dbReference type="Pharos" id="Q86Y13">
    <property type="development level" value="Tbio"/>
</dbReference>
<dbReference type="PRO" id="PR:Q86Y13"/>
<dbReference type="Proteomes" id="UP000005640">
    <property type="component" value="Chromosome 3"/>
</dbReference>
<dbReference type="RNAct" id="Q86Y13">
    <property type="molecule type" value="protein"/>
</dbReference>
<dbReference type="Bgee" id="ENSG00000198919">
    <property type="expression patterns" value="Expressed in bronchial epithelial cell and 204 other cell types or tissues"/>
</dbReference>
<dbReference type="ExpressionAtlas" id="Q86Y13">
    <property type="expression patterns" value="baseline and differential"/>
</dbReference>
<dbReference type="GO" id="GO:0005737">
    <property type="term" value="C:cytoplasm"/>
    <property type="evidence" value="ECO:0000314"/>
    <property type="project" value="UniProtKB"/>
</dbReference>
<dbReference type="GO" id="GO:0019902">
    <property type="term" value="F:phosphatase binding"/>
    <property type="evidence" value="ECO:0000314"/>
    <property type="project" value="UniProtKB"/>
</dbReference>
<dbReference type="GO" id="GO:0031593">
    <property type="term" value="F:polyubiquitin modification-dependent protein binding"/>
    <property type="evidence" value="ECO:0000314"/>
    <property type="project" value="UniProtKB"/>
</dbReference>
<dbReference type="GO" id="GO:0003723">
    <property type="term" value="F:RNA binding"/>
    <property type="evidence" value="ECO:0000314"/>
    <property type="project" value="UniProtKB"/>
</dbReference>
<dbReference type="GO" id="GO:0061630">
    <property type="term" value="F:ubiquitin protein ligase activity"/>
    <property type="evidence" value="ECO:0007669"/>
    <property type="project" value="InterPro"/>
</dbReference>
<dbReference type="GO" id="GO:0004842">
    <property type="term" value="F:ubiquitin-protein transferase activity"/>
    <property type="evidence" value="ECO:0000314"/>
    <property type="project" value="UniProtKB"/>
</dbReference>
<dbReference type="GO" id="GO:0008270">
    <property type="term" value="F:zinc ion binding"/>
    <property type="evidence" value="ECO:0007669"/>
    <property type="project" value="UniProtKB-KW"/>
</dbReference>
<dbReference type="GO" id="GO:0000209">
    <property type="term" value="P:protein polyubiquitination"/>
    <property type="evidence" value="ECO:0000314"/>
    <property type="project" value="UniProtKB"/>
</dbReference>
<dbReference type="CDD" id="cd16460">
    <property type="entry name" value="RING-H2_DZIP3"/>
    <property type="match status" value="1"/>
</dbReference>
<dbReference type="FunFam" id="3.30.40.10:FF:000308">
    <property type="entry name" value="E3 ubiquitin-protein ligase DZIP3 isoform X1"/>
    <property type="match status" value="1"/>
</dbReference>
<dbReference type="Gene3D" id="3.30.40.10">
    <property type="entry name" value="Zinc/RING finger domain, C3HC4 (zinc finger)"/>
    <property type="match status" value="1"/>
</dbReference>
<dbReference type="InterPro" id="IPR033103">
    <property type="entry name" value="DZIP3_RING-H2_finger"/>
</dbReference>
<dbReference type="InterPro" id="IPR041249">
    <property type="entry name" value="HEPN_DZIP3"/>
</dbReference>
<dbReference type="InterPro" id="IPR056872">
    <property type="entry name" value="TTC3/DZIP3-like_helical"/>
</dbReference>
<dbReference type="InterPro" id="IPR056870">
    <property type="entry name" value="TTC3/DZIP3/RBM44-like_helical"/>
</dbReference>
<dbReference type="InterPro" id="IPR043866">
    <property type="entry name" value="TTC3/DZIP3_dom"/>
</dbReference>
<dbReference type="InterPro" id="IPR001841">
    <property type="entry name" value="Znf_RING"/>
</dbReference>
<dbReference type="InterPro" id="IPR013083">
    <property type="entry name" value="Znf_RING/FYVE/PHD"/>
</dbReference>
<dbReference type="PANTHER" id="PTHR15727:SF4">
    <property type="entry name" value="E3 UBIQUITIN-PROTEIN LIGASE DZIP3"/>
    <property type="match status" value="1"/>
</dbReference>
<dbReference type="PANTHER" id="PTHR15727">
    <property type="entry name" value="RING FINGER PROTEIN 214"/>
    <property type="match status" value="1"/>
</dbReference>
<dbReference type="Pfam" id="PF18738">
    <property type="entry name" value="HEPN_DZIP3"/>
    <property type="match status" value="1"/>
</dbReference>
<dbReference type="Pfam" id="PF24525">
    <property type="entry name" value="TTC3"/>
    <property type="match status" value="1"/>
</dbReference>
<dbReference type="Pfam" id="PF24905">
    <property type="entry name" value="TTC3_9th"/>
    <property type="match status" value="1"/>
</dbReference>
<dbReference type="Pfam" id="PF19179">
    <property type="entry name" value="TTC3_DZIP3_dom"/>
    <property type="match status" value="1"/>
</dbReference>
<dbReference type="Pfam" id="PF13639">
    <property type="entry name" value="zf-RING_2"/>
    <property type="match status" value="1"/>
</dbReference>
<dbReference type="SMART" id="SM00184">
    <property type="entry name" value="RING"/>
    <property type="match status" value="1"/>
</dbReference>
<dbReference type="SUPFAM" id="SSF57850">
    <property type="entry name" value="RING/U-box"/>
    <property type="match status" value="1"/>
</dbReference>
<dbReference type="PROSITE" id="PS50089">
    <property type="entry name" value="ZF_RING_2"/>
    <property type="match status" value="1"/>
</dbReference>
<proteinExistence type="evidence at protein level"/>